<protein>
    <recommendedName>
        <fullName>Coiled-coil domain-containing protein 27</fullName>
    </recommendedName>
</protein>
<dbReference type="EMBL" id="AK133459">
    <property type="protein sequence ID" value="BAE21669.1"/>
    <property type="molecule type" value="mRNA"/>
</dbReference>
<dbReference type="CCDS" id="CCDS19008.1"/>
<dbReference type="RefSeq" id="NP_001028627.1">
    <property type="nucleotide sequence ID" value="NM_001033455.2"/>
</dbReference>
<dbReference type="SMR" id="Q3V036"/>
<dbReference type="BioGRID" id="237998">
    <property type="interactions" value="1"/>
</dbReference>
<dbReference type="CORUM" id="Q3V036"/>
<dbReference type="FunCoup" id="Q3V036">
    <property type="interactions" value="11"/>
</dbReference>
<dbReference type="STRING" id="10090.ENSMUSP00000039642"/>
<dbReference type="iPTMnet" id="Q3V036"/>
<dbReference type="PhosphoSitePlus" id="Q3V036"/>
<dbReference type="PaxDb" id="10090-ENSMUSP00000039642"/>
<dbReference type="ProteomicsDB" id="281304"/>
<dbReference type="Antibodypedia" id="52630">
    <property type="antibodies" value="51 antibodies from 9 providers"/>
</dbReference>
<dbReference type="Ensembl" id="ENSMUST00000047207.7">
    <property type="protein sequence ID" value="ENSMUSP00000039642.7"/>
    <property type="gene ID" value="ENSMUSG00000039492.8"/>
</dbReference>
<dbReference type="GeneID" id="381580"/>
<dbReference type="KEGG" id="mmu:381580"/>
<dbReference type="UCSC" id="uc008wbf.1">
    <property type="organism name" value="mouse"/>
</dbReference>
<dbReference type="AGR" id="MGI:2685881"/>
<dbReference type="CTD" id="148870"/>
<dbReference type="MGI" id="MGI:2685881">
    <property type="gene designation" value="Ccdc27"/>
</dbReference>
<dbReference type="VEuPathDB" id="HostDB:ENSMUSG00000039492"/>
<dbReference type="eggNOG" id="ENOG502RXSM">
    <property type="taxonomic scope" value="Eukaryota"/>
</dbReference>
<dbReference type="GeneTree" id="ENSGT00940000154171"/>
<dbReference type="HOGENOM" id="CLU_025625_0_0_1"/>
<dbReference type="InParanoid" id="Q3V036"/>
<dbReference type="OMA" id="DAQCPEW"/>
<dbReference type="OrthoDB" id="9949340at2759"/>
<dbReference type="PhylomeDB" id="Q3V036"/>
<dbReference type="TreeFam" id="TF335685"/>
<dbReference type="BioGRID-ORCS" id="381580">
    <property type="hits" value="1 hit in 76 CRISPR screens"/>
</dbReference>
<dbReference type="PRO" id="PR:Q3V036"/>
<dbReference type="Proteomes" id="UP000000589">
    <property type="component" value="Chromosome 4"/>
</dbReference>
<dbReference type="RNAct" id="Q3V036">
    <property type="molecule type" value="protein"/>
</dbReference>
<dbReference type="Bgee" id="ENSMUSG00000039492">
    <property type="expression patterns" value="Expressed in spermatid and 23 other cell types or tissues"/>
</dbReference>
<dbReference type="ExpressionAtlas" id="Q3V036">
    <property type="expression patterns" value="baseline and differential"/>
</dbReference>
<dbReference type="InterPro" id="IPR052642">
    <property type="entry name" value="CC-FHA_domain"/>
</dbReference>
<dbReference type="PANTHER" id="PTHR18853:SF9">
    <property type="entry name" value="COILED-COIL DOMAIN-CONTAINING PROTEIN 27"/>
    <property type="match status" value="1"/>
</dbReference>
<dbReference type="PANTHER" id="PTHR18853">
    <property type="entry name" value="FORKHEAD-ASSOCIATED DOMAIN-CONTAINING PROTEIN 1-RELATED"/>
    <property type="match status" value="1"/>
</dbReference>
<accession>Q3V036</accession>
<keyword id="KW-0175">Coiled coil</keyword>
<keyword id="KW-1185">Reference proteome</keyword>
<gene>
    <name type="primary">Ccdc27</name>
    <name type="synonym">Gm1035</name>
</gene>
<proteinExistence type="evidence at transcript level"/>
<sequence length="639" mass="73651">MKQENLTQECCSTSPKISKGLMVLQSIASRGCDTQDSEKKPQSTQQSLKKSSQAAAGYFYDKEDQIRKLSKHNGFLSEMEDMRKAFLMRPGCPQFSTRTTSMSHVGSAIMVDLPRTCSGVWKLTEDHPLGRLGSASSVDGRVFPFSKSACELNYPRKRSEPSDPSPTGSPTVVKKSQRTRTPWYISVIHEKDHSLLLMGEELQRFSEMESQMQKKDQEILTLQKEKEALKKQLKNLLRGKGTETSSASIKMDRSFETPLKLGRMSVLKTIYKEEDELQHWMQMQEEYSMAESSKELHVEPGSAIEEKSSEGPPEEAAAAKLSRPSQSKTETLLEVGPEEEEEEEEEEVEGDEAKGTEEGEILVNEEEASWELREDEECHPKRSYSMTESFEEELMAQLEEYERMLMDFQRELEFTRSRYSLATGTITSLQRQTDFQESQLRKVTTENELLEKELRERKQQIQDMTDKFSNLREEKKHQEIMGLIEKENLVLRQQVADLKMDLISSERTIKELNTQTKELEDQVNTDKDHLRRWKDLHDDLQTRNEIIQQTEQQTRVVLEATQARYEKLRNKIIQAVFSVSGNKNLSMELSDSYILESLQRIISERSDFYSQLKQKGVKVPPLQQSDVSLPSKIKKMASK</sequence>
<name>CCD27_MOUSE</name>
<organism>
    <name type="scientific">Mus musculus</name>
    <name type="common">Mouse</name>
    <dbReference type="NCBI Taxonomy" id="10090"/>
    <lineage>
        <taxon>Eukaryota</taxon>
        <taxon>Metazoa</taxon>
        <taxon>Chordata</taxon>
        <taxon>Craniata</taxon>
        <taxon>Vertebrata</taxon>
        <taxon>Euteleostomi</taxon>
        <taxon>Mammalia</taxon>
        <taxon>Eutheria</taxon>
        <taxon>Euarchontoglires</taxon>
        <taxon>Glires</taxon>
        <taxon>Rodentia</taxon>
        <taxon>Myomorpha</taxon>
        <taxon>Muroidea</taxon>
        <taxon>Muridae</taxon>
        <taxon>Murinae</taxon>
        <taxon>Mus</taxon>
        <taxon>Mus</taxon>
    </lineage>
</organism>
<feature type="chain" id="PRO_0000234021" description="Coiled-coil domain-containing protein 27">
    <location>
        <begin position="1"/>
        <end position="639"/>
    </location>
</feature>
<feature type="region of interest" description="Disordered" evidence="2">
    <location>
        <begin position="154"/>
        <end position="176"/>
    </location>
</feature>
<feature type="region of interest" description="Disordered" evidence="2">
    <location>
        <begin position="291"/>
        <end position="385"/>
    </location>
</feature>
<feature type="coiled-coil region" evidence="1">
    <location>
        <begin position="203"/>
        <end position="242"/>
    </location>
</feature>
<feature type="compositionally biased region" description="Basic and acidic residues" evidence="2">
    <location>
        <begin position="292"/>
        <end position="309"/>
    </location>
</feature>
<feature type="compositionally biased region" description="Low complexity" evidence="2">
    <location>
        <begin position="310"/>
        <end position="320"/>
    </location>
</feature>
<feature type="compositionally biased region" description="Acidic residues" evidence="2">
    <location>
        <begin position="336"/>
        <end position="350"/>
    </location>
</feature>
<feature type="compositionally biased region" description="Acidic residues" evidence="2">
    <location>
        <begin position="358"/>
        <end position="369"/>
    </location>
</feature>
<feature type="compositionally biased region" description="Basic and acidic residues" evidence="2">
    <location>
        <begin position="370"/>
        <end position="380"/>
    </location>
</feature>
<evidence type="ECO:0000255" key="1"/>
<evidence type="ECO:0000256" key="2">
    <source>
        <dbReference type="SAM" id="MobiDB-lite"/>
    </source>
</evidence>
<reference key="1">
    <citation type="journal article" date="2005" name="Science">
        <title>The transcriptional landscape of the mammalian genome.</title>
        <authorList>
            <person name="Carninci P."/>
            <person name="Kasukawa T."/>
            <person name="Katayama S."/>
            <person name="Gough J."/>
            <person name="Frith M.C."/>
            <person name="Maeda N."/>
            <person name="Oyama R."/>
            <person name="Ravasi T."/>
            <person name="Lenhard B."/>
            <person name="Wells C."/>
            <person name="Kodzius R."/>
            <person name="Shimokawa K."/>
            <person name="Bajic V.B."/>
            <person name="Brenner S.E."/>
            <person name="Batalov S."/>
            <person name="Forrest A.R."/>
            <person name="Zavolan M."/>
            <person name="Davis M.J."/>
            <person name="Wilming L.G."/>
            <person name="Aidinis V."/>
            <person name="Allen J.E."/>
            <person name="Ambesi-Impiombato A."/>
            <person name="Apweiler R."/>
            <person name="Aturaliya R.N."/>
            <person name="Bailey T.L."/>
            <person name="Bansal M."/>
            <person name="Baxter L."/>
            <person name="Beisel K.W."/>
            <person name="Bersano T."/>
            <person name="Bono H."/>
            <person name="Chalk A.M."/>
            <person name="Chiu K.P."/>
            <person name="Choudhary V."/>
            <person name="Christoffels A."/>
            <person name="Clutterbuck D.R."/>
            <person name="Crowe M.L."/>
            <person name="Dalla E."/>
            <person name="Dalrymple B.P."/>
            <person name="de Bono B."/>
            <person name="Della Gatta G."/>
            <person name="di Bernardo D."/>
            <person name="Down T."/>
            <person name="Engstrom P."/>
            <person name="Fagiolini M."/>
            <person name="Faulkner G."/>
            <person name="Fletcher C.F."/>
            <person name="Fukushima T."/>
            <person name="Furuno M."/>
            <person name="Futaki S."/>
            <person name="Gariboldi M."/>
            <person name="Georgii-Hemming P."/>
            <person name="Gingeras T.R."/>
            <person name="Gojobori T."/>
            <person name="Green R.E."/>
            <person name="Gustincich S."/>
            <person name="Harbers M."/>
            <person name="Hayashi Y."/>
            <person name="Hensch T.K."/>
            <person name="Hirokawa N."/>
            <person name="Hill D."/>
            <person name="Huminiecki L."/>
            <person name="Iacono M."/>
            <person name="Ikeo K."/>
            <person name="Iwama A."/>
            <person name="Ishikawa T."/>
            <person name="Jakt M."/>
            <person name="Kanapin A."/>
            <person name="Katoh M."/>
            <person name="Kawasawa Y."/>
            <person name="Kelso J."/>
            <person name="Kitamura H."/>
            <person name="Kitano H."/>
            <person name="Kollias G."/>
            <person name="Krishnan S.P."/>
            <person name="Kruger A."/>
            <person name="Kummerfeld S.K."/>
            <person name="Kurochkin I.V."/>
            <person name="Lareau L.F."/>
            <person name="Lazarevic D."/>
            <person name="Lipovich L."/>
            <person name="Liu J."/>
            <person name="Liuni S."/>
            <person name="McWilliam S."/>
            <person name="Madan Babu M."/>
            <person name="Madera M."/>
            <person name="Marchionni L."/>
            <person name="Matsuda H."/>
            <person name="Matsuzawa S."/>
            <person name="Miki H."/>
            <person name="Mignone F."/>
            <person name="Miyake S."/>
            <person name="Morris K."/>
            <person name="Mottagui-Tabar S."/>
            <person name="Mulder N."/>
            <person name="Nakano N."/>
            <person name="Nakauchi H."/>
            <person name="Ng P."/>
            <person name="Nilsson R."/>
            <person name="Nishiguchi S."/>
            <person name="Nishikawa S."/>
            <person name="Nori F."/>
            <person name="Ohara O."/>
            <person name="Okazaki Y."/>
            <person name="Orlando V."/>
            <person name="Pang K.C."/>
            <person name="Pavan W.J."/>
            <person name="Pavesi G."/>
            <person name="Pesole G."/>
            <person name="Petrovsky N."/>
            <person name="Piazza S."/>
            <person name="Reed J."/>
            <person name="Reid J.F."/>
            <person name="Ring B.Z."/>
            <person name="Ringwald M."/>
            <person name="Rost B."/>
            <person name="Ruan Y."/>
            <person name="Salzberg S.L."/>
            <person name="Sandelin A."/>
            <person name="Schneider C."/>
            <person name="Schoenbach C."/>
            <person name="Sekiguchi K."/>
            <person name="Semple C.A."/>
            <person name="Seno S."/>
            <person name="Sessa L."/>
            <person name="Sheng Y."/>
            <person name="Shibata Y."/>
            <person name="Shimada H."/>
            <person name="Shimada K."/>
            <person name="Silva D."/>
            <person name="Sinclair B."/>
            <person name="Sperling S."/>
            <person name="Stupka E."/>
            <person name="Sugiura K."/>
            <person name="Sultana R."/>
            <person name="Takenaka Y."/>
            <person name="Taki K."/>
            <person name="Tammoja K."/>
            <person name="Tan S.L."/>
            <person name="Tang S."/>
            <person name="Taylor M.S."/>
            <person name="Tegner J."/>
            <person name="Teichmann S.A."/>
            <person name="Ueda H.R."/>
            <person name="van Nimwegen E."/>
            <person name="Verardo R."/>
            <person name="Wei C.L."/>
            <person name="Yagi K."/>
            <person name="Yamanishi H."/>
            <person name="Zabarovsky E."/>
            <person name="Zhu S."/>
            <person name="Zimmer A."/>
            <person name="Hide W."/>
            <person name="Bult C."/>
            <person name="Grimmond S.M."/>
            <person name="Teasdale R.D."/>
            <person name="Liu E.T."/>
            <person name="Brusic V."/>
            <person name="Quackenbush J."/>
            <person name="Wahlestedt C."/>
            <person name="Mattick J.S."/>
            <person name="Hume D.A."/>
            <person name="Kai C."/>
            <person name="Sasaki D."/>
            <person name="Tomaru Y."/>
            <person name="Fukuda S."/>
            <person name="Kanamori-Katayama M."/>
            <person name="Suzuki M."/>
            <person name="Aoki J."/>
            <person name="Arakawa T."/>
            <person name="Iida J."/>
            <person name="Imamura K."/>
            <person name="Itoh M."/>
            <person name="Kato T."/>
            <person name="Kawaji H."/>
            <person name="Kawagashira N."/>
            <person name="Kawashima T."/>
            <person name="Kojima M."/>
            <person name="Kondo S."/>
            <person name="Konno H."/>
            <person name="Nakano K."/>
            <person name="Ninomiya N."/>
            <person name="Nishio T."/>
            <person name="Okada M."/>
            <person name="Plessy C."/>
            <person name="Shibata K."/>
            <person name="Shiraki T."/>
            <person name="Suzuki S."/>
            <person name="Tagami M."/>
            <person name="Waki K."/>
            <person name="Watahiki A."/>
            <person name="Okamura-Oho Y."/>
            <person name="Suzuki H."/>
            <person name="Kawai J."/>
            <person name="Hayashizaki Y."/>
        </authorList>
    </citation>
    <scope>NUCLEOTIDE SEQUENCE [LARGE SCALE MRNA]</scope>
    <source>
        <strain>C57BL/6J</strain>
        <tissue>Testis</tissue>
    </source>
</reference>